<comment type="function">
    <molecule>Cyclic AMP-responsive element-binding protein 3-like protein 1</molecule>
    <text evidence="12">Precursor of the transcription factor form (Processed cyclic AMP-responsive element-binding protein 3-like protein 1), which is embedded in the endoplasmic reticulum membrane with N-terminal DNA-binding and transcription activation domains oriented toward the cytosolic face of the membrane. In response to ER stress or DNA damage, transported to the Golgi, where it is cleaved in a site-specific manner by resident proteases S1P/MBTPS1 and S2P/MBTPS2. The released N-terminal cytosolic domain is translocated to the nucleus where it activates transcription of specific target genes involved in the cell-cycle progression inhibition.</text>
</comment>
<comment type="function">
    <molecule>Processed cyclic AMP-responsive element-binding protein 3-like protein 1</molecule>
    <text evidence="2 7 9 10 12">Transcription factor involved in cell type specific DNA damage and unfolded protein response (UPR) (PubMed:19767743, PubMed:37178686). Binds the DNA consensus sequence 5'-GTGXGCXGC-3' (By similarity). Plays a critical role in bone formation through the transcription of COL1A1, and possibly COL1A2, and the secretion of bone matrix proteins. Directly binds to the UPR element (UPRE)-like sequence in an osteoblast-specific COL1A1 promoter region and induces its transcription. Does not regulate COL1A1 in other tissues, such as skin (PubMed:19767743). Required to protect astrocytes from ER stress-induced cell death. In astrocytes, binds to the cAMP response element (CRE) of the BiP/HSPA5 promoter and participate in its transcriptional activation (PubMed:12480185, PubMed:15665855). In astrocytes and osteoblasts, upon DNA damage, inhibits cell-cycle progression after G2/M phase by binding to promoters and activating transcription of genes encoding cell-cycle inhibitors, such as p21/CDKN1A (PubMed:37178686). Required for TGFB1 to activate genes involved in the assembly of collagen extracellular matrix (By similarity).</text>
</comment>
<comment type="subunit">
    <text evidence="2">Interacts with SMAD4, the interaction takes place upon TGFB1 induction and SMAD4 acts as a CREB3L1 coactivator to induce the expression of genes involved in assembly of collagen extracellular matrix.</text>
</comment>
<comment type="subcellular location">
    <subcellularLocation>
        <location evidence="9 10">Endoplasmic reticulum membrane</location>
        <topology evidence="9">Single-pass type II membrane protein</topology>
    </subcellularLocation>
    <text evidence="9 10">ER membrane resident protein. Upon ER stress, translocated to the Golgi apparatus where it is cleaved. The cytosolic N-terminal fragment (processed cyclic AMP-responsive element-binding protein 3-like protein 1) is transported into the nucleus.</text>
</comment>
<comment type="subcellular location">
    <molecule>Processed cyclic AMP-responsive element-binding protein 3-like protein 1</molecule>
    <subcellularLocation>
        <location evidence="9 10 12">Nucleus</location>
    </subcellularLocation>
    <text evidence="9 10 12">Upon ER stress or DNA damage, transported into the nucleus.</text>
</comment>
<comment type="alternative products">
    <event type="alternative splicing"/>
    <isoform>
        <id>Q9Z125-1</id>
        <name>1</name>
        <sequence type="displayed"/>
    </isoform>
    <isoform>
        <id>Q9Z125-2</id>
        <name>2</name>
        <sequence type="described" ref="VSP_025633"/>
    </isoform>
</comment>
<comment type="tissue specificity">
    <text evidence="6 10 12">Expressed in cortical and trabecular bones. Highly expressed in osteoblasts, but not detected in osteoclasts, nor in macrophages (PubMed:19767743). Expressed at relatively low levels in lung and kidney. Weakly expressed in brain and spleen. Expressed in astrocytes (PubMed:37178686).</text>
</comment>
<comment type="developmental stage">
    <text evidence="6 8">In the embryo, primarily expressed in the cartilage, tooth germs and salivary gland. Expressed in the inner enamel epithelium during the cap and bell stages (14.5 dpc - 18.5 dpc), in the preodontoblasts during differentiation stage (18.5 dpc - P0) and in the differentiating odontoblasts during the early secretory stage (P2.5-P4.5). After birth, at P14, detected at low levels in the cerebral cortex, hippocampus and thalamus. In the adult brain, expression becomes weaker.</text>
</comment>
<comment type="induction">
    <text evidence="6 7 9 10 12">Up-regulated in astrocytes residing in or close to CNS lesions, such as cryo-injured cerebral cortex and stab-injured spinal cord (PubMed:12480185, PubMed:15665855). Up-regulated by ER stress in astrocytes (at protein level). This induction is accompanied by increased proteolytic cleavage that releases the N-terminal transcription factor domain (PubMed:15665855). Induced in astrocytes upon DNA damage (PubMed:37178686). Up-regulated by BMP2 and RUNX2 in calvaria osteoblasts. This induction at the transcript and protein levels is accompanied by increased proteolytic cleavage that releases the N-terminal transcription factor domain, possibly through mild ER stress (PubMed:19767743). Also induced by BMP2 in bone marrow stromal cells.</text>
</comment>
<comment type="PTM">
    <text evidence="9">N-glycosylated.</text>
</comment>
<comment type="PTM">
    <text evidence="11">Ubiquitinated by HRD1/SYVN1; undergoes 'Lys-48'-linked ubiquitination, followed by rapid proteasomal degradation under normal conditions. Upon ER stress, SYVN1 E3 ubiquitin-protein ligase dissociates from its substrate, ubiquitination does not occur and CREB3L1 is stabilized.</text>
</comment>
<comment type="PTM">
    <text evidence="2 10 12">Upon ER stress or DNA damage, translocated to the Golgi apparatus, where it is processed by regulated intramembrane proteolysis (RIP) to release the cytosol-facing N-terminal transcription factor domain (PubMed:19767743, PubMed:37178686). The cleavage is performed sequentially by site-1 and site-2 proteases (S1P/MBTPS1 and S2P/MBTPS2). RIP is induced by TGFB1 and ceramide.</text>
</comment>
<comment type="disruption phenotype">
    <text evidence="10">Mutant mice are born at the expected Mendelian rate, but show growth retardation. They exhibit severe osteopenia, involving a decrease in type I collagen in the bone matrix and a decline in the activity of osteoblasts. Osteoblasts show abnormally expanded rough endoplasmic reticulum, containing of a large amount of bone matrix proteins, including COL1A1 and osteocalcin/BGLAP.</text>
</comment>
<comment type="similarity">
    <text evidence="16">Belongs to the bZIP family. ATF subfamily.</text>
</comment>
<evidence type="ECO:0000250" key="1">
    <source>
        <dbReference type="UniProtKB" id="P18850"/>
    </source>
</evidence>
<evidence type="ECO:0000250" key="2">
    <source>
        <dbReference type="UniProtKB" id="Q96BA8"/>
    </source>
</evidence>
<evidence type="ECO:0000255" key="3"/>
<evidence type="ECO:0000255" key="4">
    <source>
        <dbReference type="PROSITE-ProRule" id="PRU00978"/>
    </source>
</evidence>
<evidence type="ECO:0000256" key="5">
    <source>
        <dbReference type="SAM" id="MobiDB-lite"/>
    </source>
</evidence>
<evidence type="ECO:0000269" key="6">
    <source>
    </source>
</evidence>
<evidence type="ECO:0000269" key="7">
    <source>
    </source>
</evidence>
<evidence type="ECO:0000269" key="8">
    <source>
    </source>
</evidence>
<evidence type="ECO:0000269" key="9">
    <source>
    </source>
</evidence>
<evidence type="ECO:0000269" key="10">
    <source>
    </source>
</evidence>
<evidence type="ECO:0000269" key="11">
    <source>
    </source>
</evidence>
<evidence type="ECO:0000269" key="12">
    <source>
    </source>
</evidence>
<evidence type="ECO:0000303" key="13">
    <source>
    </source>
</evidence>
<evidence type="ECO:0000303" key="14">
    <source>
    </source>
</evidence>
<evidence type="ECO:0000303" key="15">
    <source>
    </source>
</evidence>
<evidence type="ECO:0000305" key="16"/>
<proteinExistence type="evidence at protein level"/>
<accession>Q9Z125</accession>
<accession>Q91W70</accession>
<dbReference type="EMBL" id="AB017614">
    <property type="protein sequence ID" value="BAA75670.1"/>
    <property type="molecule type" value="mRNA"/>
</dbReference>
<dbReference type="EMBL" id="AL732484">
    <property type="status" value="NOT_ANNOTATED_CDS"/>
    <property type="molecule type" value="Genomic_DNA"/>
</dbReference>
<dbReference type="EMBL" id="BC016447">
    <property type="protein sequence ID" value="AAH16447.1"/>
    <property type="molecule type" value="mRNA"/>
</dbReference>
<dbReference type="RefSeq" id="NP_036087.2">
    <property type="nucleotide sequence ID" value="NM_011957.2"/>
</dbReference>
<dbReference type="SMR" id="Q9Z125"/>
<dbReference type="BioGRID" id="204979">
    <property type="interactions" value="5"/>
</dbReference>
<dbReference type="FunCoup" id="Q9Z125">
    <property type="interactions" value="1462"/>
</dbReference>
<dbReference type="IntAct" id="Q9Z125">
    <property type="interactions" value="1"/>
</dbReference>
<dbReference type="STRING" id="10090.ENSMUSP00000028663"/>
<dbReference type="GlyCosmos" id="Q9Z125">
    <property type="glycosylation" value="3 sites, No reported glycans"/>
</dbReference>
<dbReference type="GlyGen" id="Q9Z125">
    <property type="glycosylation" value="5 sites, 2 N-linked glycans (2 sites)"/>
</dbReference>
<dbReference type="PhosphoSitePlus" id="Q9Z125"/>
<dbReference type="PaxDb" id="10090-ENSMUSP00000028663"/>
<dbReference type="ProteomicsDB" id="278029">
    <molecule id="Q9Z125-1"/>
</dbReference>
<dbReference type="ProteomicsDB" id="278030">
    <molecule id="Q9Z125-2"/>
</dbReference>
<dbReference type="Pumba" id="Q9Z125"/>
<dbReference type="DNASU" id="26427"/>
<dbReference type="GeneID" id="26427"/>
<dbReference type="KEGG" id="mmu:26427"/>
<dbReference type="UCSC" id="uc008kxf.1">
    <molecule id="Q9Z125-2"/>
    <property type="organism name" value="mouse"/>
</dbReference>
<dbReference type="AGR" id="MGI:1347062"/>
<dbReference type="CTD" id="90993"/>
<dbReference type="MGI" id="MGI:1347062">
    <property type="gene designation" value="Creb3l1"/>
</dbReference>
<dbReference type="eggNOG" id="KOG0709">
    <property type="taxonomic scope" value="Eukaryota"/>
</dbReference>
<dbReference type="InParanoid" id="Q9Z125"/>
<dbReference type="OrthoDB" id="674948at2759"/>
<dbReference type="PhylomeDB" id="Q9Z125"/>
<dbReference type="TreeFam" id="TF316079"/>
<dbReference type="BioGRID-ORCS" id="26427">
    <property type="hits" value="4 hits in 80 CRISPR screens"/>
</dbReference>
<dbReference type="ChiTaRS" id="Creb3l1">
    <property type="organism name" value="mouse"/>
</dbReference>
<dbReference type="PRO" id="PR:Q9Z125"/>
<dbReference type="Proteomes" id="UP000000589">
    <property type="component" value="Unplaced"/>
</dbReference>
<dbReference type="RNAct" id="Q9Z125">
    <property type="molecule type" value="protein"/>
</dbReference>
<dbReference type="GO" id="GO:0005829">
    <property type="term" value="C:cytosol"/>
    <property type="evidence" value="ECO:0000304"/>
    <property type="project" value="Reactome"/>
</dbReference>
<dbReference type="GO" id="GO:0005783">
    <property type="term" value="C:endoplasmic reticulum"/>
    <property type="evidence" value="ECO:0000314"/>
    <property type="project" value="ParkinsonsUK-UCL"/>
</dbReference>
<dbReference type="GO" id="GO:0005789">
    <property type="term" value="C:endoplasmic reticulum membrane"/>
    <property type="evidence" value="ECO:0000304"/>
    <property type="project" value="ParkinsonsUK-UCL"/>
</dbReference>
<dbReference type="GO" id="GO:0000139">
    <property type="term" value="C:Golgi membrane"/>
    <property type="evidence" value="ECO:0000304"/>
    <property type="project" value="Reactome"/>
</dbReference>
<dbReference type="GO" id="GO:0016020">
    <property type="term" value="C:membrane"/>
    <property type="evidence" value="ECO:0000250"/>
    <property type="project" value="UniProtKB"/>
</dbReference>
<dbReference type="GO" id="GO:0005654">
    <property type="term" value="C:nucleoplasm"/>
    <property type="evidence" value="ECO:0000304"/>
    <property type="project" value="Reactome"/>
</dbReference>
<dbReference type="GO" id="GO:0005634">
    <property type="term" value="C:nucleus"/>
    <property type="evidence" value="ECO:0000314"/>
    <property type="project" value="ParkinsonsUK-UCL"/>
</dbReference>
<dbReference type="GO" id="GO:0035497">
    <property type="term" value="F:cAMP response element binding"/>
    <property type="evidence" value="ECO:0000314"/>
    <property type="project" value="UniProtKB"/>
</dbReference>
<dbReference type="GO" id="GO:0003682">
    <property type="term" value="F:chromatin binding"/>
    <property type="evidence" value="ECO:0000314"/>
    <property type="project" value="MGI"/>
</dbReference>
<dbReference type="GO" id="GO:0001228">
    <property type="term" value="F:DNA-binding transcription activator activity, RNA polymerase II-specific"/>
    <property type="evidence" value="ECO:0000314"/>
    <property type="project" value="MGI"/>
</dbReference>
<dbReference type="GO" id="GO:0003700">
    <property type="term" value="F:DNA-binding transcription factor activity"/>
    <property type="evidence" value="ECO:0000250"/>
    <property type="project" value="MGI"/>
</dbReference>
<dbReference type="GO" id="GO:0000976">
    <property type="term" value="F:transcription cis-regulatory region binding"/>
    <property type="evidence" value="ECO:0000314"/>
    <property type="project" value="ParkinsonsUK-UCL"/>
</dbReference>
<dbReference type="GO" id="GO:0030968">
    <property type="term" value="P:endoplasmic reticulum unfolded protein response"/>
    <property type="evidence" value="ECO:0000314"/>
    <property type="project" value="UniProtKB"/>
</dbReference>
<dbReference type="GO" id="GO:0070278">
    <property type="term" value="P:extracellular matrix constituent secretion"/>
    <property type="evidence" value="ECO:0000314"/>
    <property type="project" value="UniProtKB"/>
</dbReference>
<dbReference type="GO" id="GO:0007095">
    <property type="term" value="P:mitotic G2 DNA damage checkpoint signaling"/>
    <property type="evidence" value="ECO:0000314"/>
    <property type="project" value="UniProt"/>
</dbReference>
<dbReference type="GO" id="GO:1902236">
    <property type="term" value="P:negative regulation of endoplasmic reticulum stress-induced intrinsic apoptotic signaling pathway"/>
    <property type="evidence" value="ECO:0000314"/>
    <property type="project" value="ParkinsonsUK-UCL"/>
</dbReference>
<dbReference type="GO" id="GO:0001649">
    <property type="term" value="P:osteoblast differentiation"/>
    <property type="evidence" value="ECO:0000315"/>
    <property type="project" value="UniProtKB"/>
</dbReference>
<dbReference type="GO" id="GO:0032967">
    <property type="term" value="P:positive regulation of collagen biosynthetic process"/>
    <property type="evidence" value="ECO:0000250"/>
    <property type="project" value="UniProtKB"/>
</dbReference>
<dbReference type="GO" id="GO:0045944">
    <property type="term" value="P:positive regulation of transcription by RNA polymerase II"/>
    <property type="evidence" value="ECO:0000314"/>
    <property type="project" value="ParkinsonsUK-UCL"/>
</dbReference>
<dbReference type="GO" id="GO:0030278">
    <property type="term" value="P:regulation of ossification"/>
    <property type="evidence" value="ECO:0000315"/>
    <property type="project" value="MGI"/>
</dbReference>
<dbReference type="CDD" id="cd14689">
    <property type="entry name" value="bZIP_CREB3"/>
    <property type="match status" value="1"/>
</dbReference>
<dbReference type="FunFam" id="1.20.5.170:FF:000054">
    <property type="entry name" value="Cyclic AMP-responsive element-binding protein 3-like 2"/>
    <property type="match status" value="1"/>
</dbReference>
<dbReference type="Gene3D" id="1.20.5.170">
    <property type="match status" value="1"/>
</dbReference>
<dbReference type="InterPro" id="IPR004827">
    <property type="entry name" value="bZIP"/>
</dbReference>
<dbReference type="InterPro" id="IPR046347">
    <property type="entry name" value="bZIP_sf"/>
</dbReference>
<dbReference type="PANTHER" id="PTHR46004">
    <property type="entry name" value="CYCLIC AMP RESPONSE ELEMENT-BINDING PROTEIN A"/>
    <property type="match status" value="1"/>
</dbReference>
<dbReference type="PANTHER" id="PTHR46004:SF1">
    <property type="entry name" value="CYCLIC AMP-RESPONSIVE ELEMENT-BINDING PROTEIN 3-LIKE PROTEIN 1"/>
    <property type="match status" value="1"/>
</dbReference>
<dbReference type="Pfam" id="PF00170">
    <property type="entry name" value="bZIP_1"/>
    <property type="match status" value="1"/>
</dbReference>
<dbReference type="PRINTS" id="PR00041">
    <property type="entry name" value="LEUZIPPRCREB"/>
</dbReference>
<dbReference type="SMART" id="SM00338">
    <property type="entry name" value="BRLZ"/>
    <property type="match status" value="1"/>
</dbReference>
<dbReference type="SUPFAM" id="SSF57959">
    <property type="entry name" value="Leucine zipper domain"/>
    <property type="match status" value="1"/>
</dbReference>
<dbReference type="PROSITE" id="PS50217">
    <property type="entry name" value="BZIP"/>
    <property type="match status" value="1"/>
</dbReference>
<dbReference type="PROSITE" id="PS00036">
    <property type="entry name" value="BZIP_BASIC"/>
    <property type="match status" value="1"/>
</dbReference>
<keyword id="KW-0010">Activator</keyword>
<keyword id="KW-0025">Alternative splicing</keyword>
<keyword id="KW-0217">Developmental protein</keyword>
<keyword id="KW-0238">DNA-binding</keyword>
<keyword id="KW-0256">Endoplasmic reticulum</keyword>
<keyword id="KW-0325">Glycoprotein</keyword>
<keyword id="KW-1017">Isopeptide bond</keyword>
<keyword id="KW-0472">Membrane</keyword>
<keyword id="KW-0539">Nucleus</keyword>
<keyword id="KW-1185">Reference proteome</keyword>
<keyword id="KW-0735">Signal-anchor</keyword>
<keyword id="KW-0804">Transcription</keyword>
<keyword id="KW-0805">Transcription regulation</keyword>
<keyword id="KW-0812">Transmembrane</keyword>
<keyword id="KW-1133">Transmembrane helix</keyword>
<keyword id="KW-0832">Ubl conjugation</keyword>
<keyword id="KW-0834">Unfolded protein response</keyword>
<name>CR3L1_MOUSE</name>
<protein>
    <recommendedName>
        <fullName>Cyclic AMP-responsive element-binding protein 3-like protein 1</fullName>
        <shortName>cAMP-responsive element-binding protein 3-like protein 1</shortName>
    </recommendedName>
    <alternativeName>
        <fullName evidence="13">Old astrocyte specifically-induced substance</fullName>
        <shortName evidence="13">OASIS</shortName>
    </alternativeName>
    <component>
        <recommendedName>
            <fullName>Processed cyclic AMP-responsive element-binding protein 3-like protein 1</fullName>
        </recommendedName>
        <alternativeName>
            <fullName evidence="14">Oasis N-terminal fragment</fullName>
            <shortName evidence="14">OA-N</shortName>
        </alternativeName>
    </component>
</protein>
<organism>
    <name type="scientific">Mus musculus</name>
    <name type="common">Mouse</name>
    <dbReference type="NCBI Taxonomy" id="10090"/>
    <lineage>
        <taxon>Eukaryota</taxon>
        <taxon>Metazoa</taxon>
        <taxon>Chordata</taxon>
        <taxon>Craniata</taxon>
        <taxon>Vertebrata</taxon>
        <taxon>Euteleostomi</taxon>
        <taxon>Mammalia</taxon>
        <taxon>Eutheria</taxon>
        <taxon>Euarchontoglires</taxon>
        <taxon>Glires</taxon>
        <taxon>Rodentia</taxon>
        <taxon>Myomorpha</taxon>
        <taxon>Muroidea</taxon>
        <taxon>Muridae</taxon>
        <taxon>Murinae</taxon>
        <taxon>Mus</taxon>
        <taxon>Mus</taxon>
    </lineage>
</organism>
<gene>
    <name type="primary">Creb3l1</name>
    <name evidence="15" type="synonym">Oasis</name>
</gene>
<reference key="1">
    <citation type="journal article" date="1999" name="Brain Res. Mol. Brain Res.">
        <title>Identification of a novel gene, OASIS, which encodes for a putative CREB/ATF family transcription factor in the long-term cultured astrocytes and gliotic tissue.</title>
        <authorList>
            <person name="Honma Y."/>
            <person name="Kanazawa K."/>
            <person name="Mori T."/>
            <person name="Tanno Y."/>
            <person name="Tojo M."/>
            <person name="Kiyosawa H."/>
            <person name="Takeda J."/>
            <person name="Nikaido T."/>
            <person name="Tsukamoto T."/>
            <person name="Yokoya S."/>
            <person name="Wanaka A."/>
        </authorList>
    </citation>
    <scope>NUCLEOTIDE SEQUENCE [MRNA] (ISOFORM 2)</scope>
    <scope>TISSUE SPECIFICITY</scope>
    <scope>DEVELOPMENTAL STAGE</scope>
    <scope>INDUCTION</scope>
    <source>
        <strain>ICR</strain>
    </source>
</reference>
<reference key="2">
    <citation type="journal article" date="2009" name="PLoS Biol.">
        <title>Lineage-specific biology revealed by a finished genome assembly of the mouse.</title>
        <authorList>
            <person name="Church D.M."/>
            <person name="Goodstadt L."/>
            <person name="Hillier L.W."/>
            <person name="Zody M.C."/>
            <person name="Goldstein S."/>
            <person name="She X."/>
            <person name="Bult C.J."/>
            <person name="Agarwala R."/>
            <person name="Cherry J.L."/>
            <person name="DiCuccio M."/>
            <person name="Hlavina W."/>
            <person name="Kapustin Y."/>
            <person name="Meric P."/>
            <person name="Maglott D."/>
            <person name="Birtle Z."/>
            <person name="Marques A.C."/>
            <person name="Graves T."/>
            <person name="Zhou S."/>
            <person name="Teague B."/>
            <person name="Potamousis K."/>
            <person name="Churas C."/>
            <person name="Place M."/>
            <person name="Herschleb J."/>
            <person name="Runnheim R."/>
            <person name="Forrest D."/>
            <person name="Amos-Landgraf J."/>
            <person name="Schwartz D.C."/>
            <person name="Cheng Z."/>
            <person name="Lindblad-Toh K."/>
            <person name="Eichler E.E."/>
            <person name="Ponting C.P."/>
        </authorList>
    </citation>
    <scope>NUCLEOTIDE SEQUENCE [LARGE SCALE GENOMIC DNA]</scope>
    <source>
        <strain>C57BL/6J</strain>
    </source>
</reference>
<reference key="3">
    <citation type="journal article" date="2004" name="Genome Res.">
        <title>The status, quality, and expansion of the NIH full-length cDNA project: the Mammalian Gene Collection (MGC).</title>
        <authorList>
            <consortium name="The MGC Project Team"/>
        </authorList>
    </citation>
    <scope>NUCLEOTIDE SEQUENCE [LARGE SCALE MRNA] (ISOFORM 1)</scope>
    <source>
        <strain>FVB/N</strain>
        <tissue>Salivary gland</tissue>
    </source>
</reference>
<reference key="4">
    <citation type="journal article" date="2002" name="Brain Res. Mol. Brain Res.">
        <title>Expression of OASIS, a CREB/ATF family transcription factor, in CNS lesion and its transcriptional activity.</title>
        <authorList>
            <person name="Nikaido T."/>
            <person name="Iseki K."/>
            <person name="Mori T."/>
            <person name="Takaki H."/>
            <person name="Yokoya S."/>
            <person name="Hagino S."/>
            <person name="Takeda J."/>
            <person name="Zhang Y."/>
            <person name="Takeuchi M."/>
            <person name="Kikuchi S."/>
            <person name="Wanaka A."/>
        </authorList>
    </citation>
    <scope>FUNCTION AS TRANSCRIPTION ACTIVATOR</scope>
    <scope>BINDING TO CRE CONSENSUS SEQUENCE</scope>
    <scope>INDUCTION</scope>
    <scope>IDENTIFICATION OF THE TRANSACTIVATION DOMAIN</scope>
</reference>
<reference key="5">
    <citation type="journal article" date="2003" name="Anat. Embryol. (Berl.)">
        <title>Comparison of expression patterns between CREB family transcription factor OASIS and proteoglycan core protein genes during murine tooth development.</title>
        <authorList>
            <person name="Hikake T."/>
            <person name="Mori T."/>
            <person name="Iseki K."/>
            <person name="Hagino S."/>
            <person name="Zhang Y."/>
            <person name="Takagi H."/>
            <person name="Yokoya S."/>
            <person name="Wanaka A."/>
        </authorList>
    </citation>
    <scope>DEVELOPMENTAL STAGE</scope>
</reference>
<reference key="6">
    <citation type="journal article" date="2005" name="Nat. Cell Biol.">
        <title>OASIS, a CREB/ATF-family member, modulates UPR signalling in astrocytes.</title>
        <authorList>
            <person name="Kondo S."/>
            <person name="Murakami T."/>
            <person name="Tatsumi K."/>
            <person name="Ogata M."/>
            <person name="Kanemoto S."/>
            <person name="Otori K."/>
            <person name="Iseki K."/>
            <person name="Wanaka A."/>
            <person name="Imaizumi K."/>
        </authorList>
    </citation>
    <scope>FUNCTION</scope>
    <scope>SUBCELLULAR LOCATION</scope>
    <scope>INDUCTION BY ER STRESS</scope>
    <scope>GLYCOSYLATION</scope>
    <scope>MUTAGENESIS OF PRO-392; ARG-423 AND LEU-426</scope>
</reference>
<reference key="7">
    <citation type="journal article" date="2009" name="Nat. Cell Biol.">
        <title>Signalling mediated by the endoplasmic reticulum stress transducer OASIS is involved in bone formation.</title>
        <authorList>
            <person name="Murakami T."/>
            <person name="Saito A."/>
            <person name="Hino S."/>
            <person name="Kondo S."/>
            <person name="Kanemoto S."/>
            <person name="Chihara K."/>
            <person name="Sekiya H."/>
            <person name="Tsumagari K."/>
            <person name="Ochiai K."/>
            <person name="Yoshinaga K."/>
            <person name="Saitoh M."/>
            <person name="Nishimura R."/>
            <person name="Yoneda T."/>
            <person name="Kou I."/>
            <person name="Furuichi T."/>
            <person name="Ikegawa S."/>
            <person name="Ikawa M."/>
            <person name="Okabe M."/>
            <person name="Wanaka A."/>
            <person name="Imaizumi K."/>
        </authorList>
    </citation>
    <scope>FUNCTION IN OSTEOGENESIS</scope>
    <scope>SUBCELLULAR LOCATION</scope>
    <scope>TISSUE SPECIFICITY</scope>
    <scope>INDUCTION BY BMP2 AND RUNX2</scope>
    <scope>CLEAVAGE UPON ER STRESS</scope>
    <scope>DISRUPTION PHENOTYPE</scope>
</reference>
<reference key="8">
    <citation type="journal article" date="2012" name="Cell Death Differ.">
        <title>Activation of OASIS family, ER stress transducers, is dependent on its stabilization.</title>
        <authorList>
            <person name="Kondo S."/>
            <person name="Hino S.I."/>
            <person name="Saito A."/>
            <person name="Kanemoto S."/>
            <person name="Kawasaki N."/>
            <person name="Asada R."/>
            <person name="Izumi S."/>
            <person name="Iwamoto H."/>
            <person name="Oki M."/>
            <person name="Miyagi H."/>
            <person name="Kaneko M."/>
            <person name="Nomura Y."/>
            <person name="Urano F."/>
            <person name="Imaizumi K."/>
        </authorList>
    </citation>
    <scope>UBIQUITINATION</scope>
</reference>
<reference key="9">
    <citation type="journal article" date="2023" name="Cell Rep.">
        <title>p53-independent tumor suppression by cell-cycle arrest via CREB/ATF transcription factor OASIS.</title>
        <authorList>
            <person name="Saito A."/>
            <person name="Kamikawa Y."/>
            <person name="Ito T."/>
            <person name="Matsuhisa K."/>
            <person name="Kaneko M."/>
            <person name="Okamoto T."/>
            <person name="Yoshimaru T."/>
            <person name="Matsushita Y."/>
            <person name="Katagiri T."/>
            <person name="Imaizumi K."/>
        </authorList>
    </citation>
    <scope>FUNCTION</scope>
    <scope>INDUCTION BY DNA DAMAGE</scope>
    <scope>TISSUE SPECIFICITY</scope>
    <scope>SUBCELLULAR LOCATION</scope>
    <scope>PROTEOLYTIC PROCESSING</scope>
</reference>
<feature type="chain" id="PRO_0000288065" description="Cyclic AMP-responsive element-binding protein 3-like protein 1">
    <location>
        <begin position="1"/>
        <end position="519"/>
    </location>
</feature>
<feature type="chain" id="PRO_0000296207" description="Processed cyclic AMP-responsive element-binding protein 3-like protein 1">
    <location>
        <begin position="1"/>
        <end status="unknown"/>
    </location>
</feature>
<feature type="topological domain" description="Cytoplasmic" evidence="3">
    <location>
        <begin position="1"/>
        <end position="376"/>
    </location>
</feature>
<feature type="transmembrane region" description="Helical; Signal-anchor for type II membrane protein" evidence="3">
    <location>
        <begin position="377"/>
        <end position="397"/>
    </location>
</feature>
<feature type="topological domain" description="Lumenal" evidence="3">
    <location>
        <begin position="398"/>
        <end position="519"/>
    </location>
</feature>
<feature type="domain" description="bZIP" evidence="4">
    <location>
        <begin position="290"/>
        <end position="353"/>
    </location>
</feature>
<feature type="region of interest" description="Required for transcription activation" evidence="2">
    <location>
        <begin position="1"/>
        <end position="60"/>
    </location>
</feature>
<feature type="region of interest" description="Disordered" evidence="5">
    <location>
        <begin position="200"/>
        <end position="259"/>
    </location>
</feature>
<feature type="region of interest" description="Basic motif" evidence="4">
    <location>
        <begin position="292"/>
        <end position="321"/>
    </location>
</feature>
<feature type="region of interest" description="Leucine-zipper" evidence="4">
    <location>
        <begin position="332"/>
        <end position="353"/>
    </location>
</feature>
<feature type="region of interest" description="Disordered" evidence="5">
    <location>
        <begin position="449"/>
        <end position="519"/>
    </location>
</feature>
<feature type="short sequence motif" description="S2P recognition" evidence="2">
    <location>
        <begin position="392"/>
        <end position="395"/>
    </location>
</feature>
<feature type="short sequence motif" description="S1P recognition" evidence="2">
    <location>
        <begin position="423"/>
        <end position="426"/>
    </location>
</feature>
<feature type="compositionally biased region" description="Low complexity" evidence="5">
    <location>
        <begin position="210"/>
        <end position="223"/>
    </location>
</feature>
<feature type="compositionally biased region" description="Polar residues" evidence="5">
    <location>
        <begin position="236"/>
        <end position="246"/>
    </location>
</feature>
<feature type="compositionally biased region" description="Basic and acidic residues" evidence="5">
    <location>
        <begin position="462"/>
        <end position="486"/>
    </location>
</feature>
<feature type="site" description="Cleavage; by MBTPS1" evidence="1">
    <location>
        <begin position="426"/>
        <end position="427"/>
    </location>
</feature>
<feature type="glycosylation site" description="N-linked (GlcNAc...) asparagine" evidence="3">
    <location>
        <position position="493"/>
    </location>
</feature>
<feature type="glycosylation site" description="N-linked (GlcNAc...) asparagine" evidence="3">
    <location>
        <position position="498"/>
    </location>
</feature>
<feature type="glycosylation site" description="N-linked (GlcNAc...) asparagine" evidence="3">
    <location>
        <position position="513"/>
    </location>
</feature>
<feature type="cross-link" description="Glycyl lysine isopeptide (Lys-Gly) (interchain with G-Cter in SUMO2)" evidence="2">
    <location>
        <position position="184"/>
    </location>
</feature>
<feature type="splice variant" id="VSP_025633" description="In isoform 2." evidence="13">
    <original>EWFHDRDLGPNTTIKLS</original>
    <variation>KGVVP</variation>
    <location>
        <begin position="503"/>
        <end position="519"/>
    </location>
</feature>
<feature type="mutagenesis site" description="Loss of proteolytic cleavage; when associated with V-423 and V-426." evidence="9">
    <original>P</original>
    <variation>L</variation>
    <location>
        <position position="392"/>
    </location>
</feature>
<feature type="mutagenesis site" description="Loss of proteolytic cleavage; when associated with L-392 and V-426." evidence="9">
    <original>R</original>
    <variation>A</variation>
    <location>
        <position position="423"/>
    </location>
</feature>
<feature type="mutagenesis site" description="Loss of proteolytic cleavage; when associated with L-392 and A-423." evidence="9">
    <original>L</original>
    <variation>V</variation>
    <location>
        <position position="426"/>
    </location>
</feature>
<sequence length="519" mass="56959">MDAVLEPFPADRLFPGSSFLDLGDLNESDFLNNAHFPEHLDHFVENMEDFSNDLFSSFFDDPVLDEKSALLDMELDSPAPGIQAEHSYSLSGDSAPQSPLVPVKMEDTTQDVEHGAWALGNKLCSIMVKQEQSPELPVDPLAASSAMAAAAAMATPPLLGLSPMPRLPIPHQAPGEMTQLPVIKAEPPEMSQFLKVTPEDLVQMPPTPPSSHGSDSDGSQSPRSLPPSSPVRPMARSSTAISTSPLLTAPHKLQGTSGPLLLTEEEKRTLIAEGYPIPTKLPLTKAEEKALKRVRRKIKNKISAQESRRKKKEYVECLEKKVETYTSENNELWKKVETLETANRTLLQQLQKLQTLVTSKISRPYKMAATQTGTCLMVAALCFVLVLGSLVPCLPAFSSGSMTVKEDPIAADSVYAASQMPSRSLLFYDDGAGSWEDGRGALLPVEPPEGWELKPGGPAEQRPQDHLRHDRADSIHETTKYLRETWPEDTDDNGTSPNFSHPEWFHDRDLGPNTTIKLS</sequence>